<name>RSMG_BRUSU</name>
<evidence type="ECO:0000255" key="1">
    <source>
        <dbReference type="HAMAP-Rule" id="MF_00074"/>
    </source>
</evidence>
<proteinExistence type="inferred from homology"/>
<sequence length="213" mass="23499">MSADIRFDSLKTIVPAVSRETADRLIAFEDLFRKWSKAINLASPSTLADLWNRHILDSAQLFPLAKEATRWLDIGSGGGFPGIVTACFLAERSGGCIDLVESAGKKAAFLRTAAGHLYVPARVHSARIESMWEKIETPQVVTARALASLGDLFTLAEPWLSDGAKALFQKGRDYQREIDESRVGWSFDLVKHPSAIDQASVILEISNLRRKTD</sequence>
<reference key="1">
    <citation type="journal article" date="2002" name="Proc. Natl. Acad. Sci. U.S.A.">
        <title>The Brucella suis genome reveals fundamental similarities between animal and plant pathogens and symbionts.</title>
        <authorList>
            <person name="Paulsen I.T."/>
            <person name="Seshadri R."/>
            <person name="Nelson K.E."/>
            <person name="Eisen J.A."/>
            <person name="Heidelberg J.F."/>
            <person name="Read T.D."/>
            <person name="Dodson R.J."/>
            <person name="Umayam L.A."/>
            <person name="Brinkac L.M."/>
            <person name="Beanan M.J."/>
            <person name="Daugherty S.C."/>
            <person name="DeBoy R.T."/>
            <person name="Durkin A.S."/>
            <person name="Kolonay J.F."/>
            <person name="Madupu R."/>
            <person name="Nelson W.C."/>
            <person name="Ayodeji B."/>
            <person name="Kraul M."/>
            <person name="Shetty J."/>
            <person name="Malek J.A."/>
            <person name="Van Aken S.E."/>
            <person name="Riedmuller S."/>
            <person name="Tettelin H."/>
            <person name="Gill S.R."/>
            <person name="White O."/>
            <person name="Salzberg S.L."/>
            <person name="Hoover D.L."/>
            <person name="Lindler L.E."/>
            <person name="Halling S.M."/>
            <person name="Boyle S.M."/>
            <person name="Fraser C.M."/>
        </authorList>
    </citation>
    <scope>NUCLEOTIDE SEQUENCE [LARGE SCALE GENOMIC DNA]</scope>
    <source>
        <strain>1330</strain>
    </source>
</reference>
<reference key="2">
    <citation type="journal article" date="2011" name="J. Bacteriol.">
        <title>Revised genome sequence of Brucella suis 1330.</title>
        <authorList>
            <person name="Tae H."/>
            <person name="Shallom S."/>
            <person name="Settlage R."/>
            <person name="Preston D."/>
            <person name="Adams L.G."/>
            <person name="Garner H.R."/>
        </authorList>
    </citation>
    <scope>NUCLEOTIDE SEQUENCE [LARGE SCALE GENOMIC DNA]</scope>
    <source>
        <strain>1330</strain>
    </source>
</reference>
<protein>
    <recommendedName>
        <fullName evidence="1">Ribosomal RNA small subunit methyltransferase G</fullName>
        <ecNumber evidence="1">2.1.1.170</ecNumber>
    </recommendedName>
    <alternativeName>
        <fullName evidence="1">16S rRNA 7-methylguanosine methyltransferase</fullName>
        <shortName evidence="1">16S rRNA m7G methyltransferase</shortName>
    </alternativeName>
</protein>
<accession>Q8FY29</accession>
<accession>G0K908</accession>
<organism>
    <name type="scientific">Brucella suis biovar 1 (strain 1330)</name>
    <dbReference type="NCBI Taxonomy" id="204722"/>
    <lineage>
        <taxon>Bacteria</taxon>
        <taxon>Pseudomonadati</taxon>
        <taxon>Pseudomonadota</taxon>
        <taxon>Alphaproteobacteria</taxon>
        <taxon>Hyphomicrobiales</taxon>
        <taxon>Brucellaceae</taxon>
        <taxon>Brucella/Ochrobactrum group</taxon>
        <taxon>Brucella</taxon>
    </lineage>
</organism>
<keyword id="KW-0963">Cytoplasm</keyword>
<keyword id="KW-0489">Methyltransferase</keyword>
<keyword id="KW-0698">rRNA processing</keyword>
<keyword id="KW-0949">S-adenosyl-L-methionine</keyword>
<keyword id="KW-0808">Transferase</keyword>
<gene>
    <name evidence="1" type="primary">rsmG</name>
    <name type="synonym">gidB</name>
    <name type="ordered locus">BR2060</name>
    <name type="ordered locus">BS1330_I2054</name>
</gene>
<dbReference type="EC" id="2.1.1.170" evidence="1"/>
<dbReference type="EMBL" id="AE014291">
    <property type="protein sequence ID" value="AAN30950.1"/>
    <property type="molecule type" value="Genomic_DNA"/>
</dbReference>
<dbReference type="EMBL" id="CP002997">
    <property type="protein sequence ID" value="AEM19367.1"/>
    <property type="molecule type" value="Genomic_DNA"/>
</dbReference>
<dbReference type="RefSeq" id="WP_006191026.1">
    <property type="nucleotide sequence ID" value="NZ_KN046804.1"/>
</dbReference>
<dbReference type="SMR" id="Q8FY29"/>
<dbReference type="GeneID" id="45052989"/>
<dbReference type="KEGG" id="bms:BR2060"/>
<dbReference type="KEGG" id="bsi:BS1330_I2054"/>
<dbReference type="PATRIC" id="fig|204722.21.peg.1265"/>
<dbReference type="HOGENOM" id="CLU_065341_1_1_5"/>
<dbReference type="PhylomeDB" id="Q8FY29"/>
<dbReference type="Proteomes" id="UP000007104">
    <property type="component" value="Chromosome I"/>
</dbReference>
<dbReference type="GO" id="GO:0005829">
    <property type="term" value="C:cytosol"/>
    <property type="evidence" value="ECO:0007669"/>
    <property type="project" value="TreeGrafter"/>
</dbReference>
<dbReference type="GO" id="GO:0070043">
    <property type="term" value="F:rRNA (guanine-N7-)-methyltransferase activity"/>
    <property type="evidence" value="ECO:0007669"/>
    <property type="project" value="UniProtKB-UniRule"/>
</dbReference>
<dbReference type="Gene3D" id="3.40.50.150">
    <property type="entry name" value="Vaccinia Virus protein VP39"/>
    <property type="match status" value="1"/>
</dbReference>
<dbReference type="HAMAP" id="MF_00074">
    <property type="entry name" value="16SrRNA_methyltr_G"/>
    <property type="match status" value="1"/>
</dbReference>
<dbReference type="InterPro" id="IPR003682">
    <property type="entry name" value="rRNA_ssu_MeTfrase_G"/>
</dbReference>
<dbReference type="InterPro" id="IPR029063">
    <property type="entry name" value="SAM-dependent_MTases_sf"/>
</dbReference>
<dbReference type="NCBIfam" id="TIGR00138">
    <property type="entry name" value="rsmG_gidB"/>
    <property type="match status" value="1"/>
</dbReference>
<dbReference type="PANTHER" id="PTHR31760">
    <property type="entry name" value="S-ADENOSYL-L-METHIONINE-DEPENDENT METHYLTRANSFERASES SUPERFAMILY PROTEIN"/>
    <property type="match status" value="1"/>
</dbReference>
<dbReference type="PANTHER" id="PTHR31760:SF0">
    <property type="entry name" value="S-ADENOSYL-L-METHIONINE-DEPENDENT METHYLTRANSFERASES SUPERFAMILY PROTEIN"/>
    <property type="match status" value="1"/>
</dbReference>
<dbReference type="Pfam" id="PF02527">
    <property type="entry name" value="GidB"/>
    <property type="match status" value="1"/>
</dbReference>
<dbReference type="PIRSF" id="PIRSF003078">
    <property type="entry name" value="GidB"/>
    <property type="match status" value="1"/>
</dbReference>
<dbReference type="SUPFAM" id="SSF53335">
    <property type="entry name" value="S-adenosyl-L-methionine-dependent methyltransferases"/>
    <property type="match status" value="1"/>
</dbReference>
<comment type="function">
    <text evidence="1">Specifically methylates the N7 position of guanine in position 527 of 16S rRNA.</text>
</comment>
<comment type="catalytic activity">
    <reaction evidence="1">
        <text>guanosine(527) in 16S rRNA + S-adenosyl-L-methionine = N(7)-methylguanosine(527) in 16S rRNA + S-adenosyl-L-homocysteine</text>
        <dbReference type="Rhea" id="RHEA:42732"/>
        <dbReference type="Rhea" id="RHEA-COMP:10209"/>
        <dbReference type="Rhea" id="RHEA-COMP:10210"/>
        <dbReference type="ChEBI" id="CHEBI:57856"/>
        <dbReference type="ChEBI" id="CHEBI:59789"/>
        <dbReference type="ChEBI" id="CHEBI:74269"/>
        <dbReference type="ChEBI" id="CHEBI:74480"/>
        <dbReference type="EC" id="2.1.1.170"/>
    </reaction>
</comment>
<comment type="subcellular location">
    <subcellularLocation>
        <location evidence="1">Cytoplasm</location>
    </subcellularLocation>
</comment>
<comment type="similarity">
    <text evidence="1">Belongs to the methyltransferase superfamily. RNA methyltransferase RsmG family.</text>
</comment>
<feature type="chain" id="PRO_0000184230" description="Ribosomal RNA small subunit methyltransferase G">
    <location>
        <begin position="1"/>
        <end position="213"/>
    </location>
</feature>
<feature type="binding site" evidence="1">
    <location>
        <position position="75"/>
    </location>
    <ligand>
        <name>S-adenosyl-L-methionine</name>
        <dbReference type="ChEBI" id="CHEBI:59789"/>
    </ligand>
</feature>
<feature type="binding site" evidence="1">
    <location>
        <position position="80"/>
    </location>
    <ligand>
        <name>S-adenosyl-L-methionine</name>
        <dbReference type="ChEBI" id="CHEBI:59789"/>
    </ligand>
</feature>
<feature type="binding site" evidence="1">
    <location>
        <begin position="128"/>
        <end position="129"/>
    </location>
    <ligand>
        <name>S-adenosyl-L-methionine</name>
        <dbReference type="ChEBI" id="CHEBI:59789"/>
    </ligand>
</feature>
<feature type="binding site" evidence="1">
    <location>
        <position position="144"/>
    </location>
    <ligand>
        <name>S-adenosyl-L-methionine</name>
        <dbReference type="ChEBI" id="CHEBI:59789"/>
    </ligand>
</feature>